<accession>B0TX18</accession>
<feature type="chain" id="PRO_1000082519" description="tRNA (guanine-N(1)-)-methyltransferase">
    <location>
        <begin position="1"/>
        <end position="255"/>
    </location>
</feature>
<feature type="binding site" evidence="1">
    <location>
        <position position="113"/>
    </location>
    <ligand>
        <name>S-adenosyl-L-methionine</name>
        <dbReference type="ChEBI" id="CHEBI:59789"/>
    </ligand>
</feature>
<feature type="binding site" evidence="1">
    <location>
        <begin position="133"/>
        <end position="138"/>
    </location>
    <ligand>
        <name>S-adenosyl-L-methionine</name>
        <dbReference type="ChEBI" id="CHEBI:59789"/>
    </ligand>
</feature>
<reference key="1">
    <citation type="submission" date="2007-12" db="EMBL/GenBank/DDBJ databases">
        <title>Complete sequence of chromosome of Francisella philomiragia subsp. philomiragia ATCC 25017.</title>
        <authorList>
            <consortium name="US DOE Joint Genome Institute"/>
            <person name="Copeland A."/>
            <person name="Lucas S."/>
            <person name="Lapidus A."/>
            <person name="Barry K."/>
            <person name="Detter J.C."/>
            <person name="Glavina del Rio T."/>
            <person name="Hammon N."/>
            <person name="Israni S."/>
            <person name="Dalin E."/>
            <person name="Tice H."/>
            <person name="Pitluck S."/>
            <person name="Chain P."/>
            <person name="Malfatti S."/>
            <person name="Shin M."/>
            <person name="Vergez L."/>
            <person name="Schmutz J."/>
            <person name="Larimer F."/>
            <person name="Land M."/>
            <person name="Hauser L."/>
            <person name="Richardson P."/>
        </authorList>
    </citation>
    <scope>NUCLEOTIDE SEQUENCE [LARGE SCALE GENOMIC DNA]</scope>
    <source>
        <strain>ATCC 25017 / CCUG 19701 / FSC 153 / O#319-036</strain>
    </source>
</reference>
<name>TRMD_FRAP2</name>
<proteinExistence type="inferred from homology"/>
<evidence type="ECO:0000255" key="1">
    <source>
        <dbReference type="HAMAP-Rule" id="MF_00605"/>
    </source>
</evidence>
<protein>
    <recommendedName>
        <fullName evidence="1">tRNA (guanine-N(1)-)-methyltransferase</fullName>
        <ecNumber evidence="1">2.1.1.228</ecNumber>
    </recommendedName>
    <alternativeName>
        <fullName evidence="1">M1G-methyltransferase</fullName>
    </alternativeName>
    <alternativeName>
        <fullName evidence="1">tRNA [GM37] methyltransferase</fullName>
    </alternativeName>
</protein>
<gene>
    <name evidence="1" type="primary">trmD</name>
    <name type="ordered locus">Fphi_1054</name>
</gene>
<dbReference type="EC" id="2.1.1.228" evidence="1"/>
<dbReference type="EMBL" id="CP000937">
    <property type="protein sequence ID" value="ABZ87276.1"/>
    <property type="molecule type" value="Genomic_DNA"/>
</dbReference>
<dbReference type="SMR" id="B0TX18"/>
<dbReference type="KEGG" id="fph:Fphi_1054"/>
<dbReference type="eggNOG" id="COG0336">
    <property type="taxonomic scope" value="Bacteria"/>
</dbReference>
<dbReference type="HOGENOM" id="CLU_047363_0_1_6"/>
<dbReference type="GO" id="GO:0005829">
    <property type="term" value="C:cytosol"/>
    <property type="evidence" value="ECO:0007669"/>
    <property type="project" value="TreeGrafter"/>
</dbReference>
<dbReference type="GO" id="GO:0052906">
    <property type="term" value="F:tRNA (guanine(37)-N1)-methyltransferase activity"/>
    <property type="evidence" value="ECO:0007669"/>
    <property type="project" value="UniProtKB-UniRule"/>
</dbReference>
<dbReference type="GO" id="GO:0002939">
    <property type="term" value="P:tRNA N1-guanine methylation"/>
    <property type="evidence" value="ECO:0007669"/>
    <property type="project" value="TreeGrafter"/>
</dbReference>
<dbReference type="CDD" id="cd18080">
    <property type="entry name" value="TrmD-like"/>
    <property type="match status" value="1"/>
</dbReference>
<dbReference type="FunFam" id="1.10.1270.20:FF:000001">
    <property type="entry name" value="tRNA (guanine-N(1)-)-methyltransferase"/>
    <property type="match status" value="1"/>
</dbReference>
<dbReference type="FunFam" id="3.40.1280.10:FF:000001">
    <property type="entry name" value="tRNA (guanine-N(1)-)-methyltransferase"/>
    <property type="match status" value="1"/>
</dbReference>
<dbReference type="Gene3D" id="3.40.1280.10">
    <property type="match status" value="1"/>
</dbReference>
<dbReference type="Gene3D" id="1.10.1270.20">
    <property type="entry name" value="tRNA(m1g37)methyltransferase, domain 2"/>
    <property type="match status" value="1"/>
</dbReference>
<dbReference type="HAMAP" id="MF_00605">
    <property type="entry name" value="TrmD"/>
    <property type="match status" value="1"/>
</dbReference>
<dbReference type="InterPro" id="IPR029028">
    <property type="entry name" value="Alpha/beta_knot_MTases"/>
</dbReference>
<dbReference type="InterPro" id="IPR023148">
    <property type="entry name" value="tRNA_m1G_MeTrfase_C_sf"/>
</dbReference>
<dbReference type="InterPro" id="IPR002649">
    <property type="entry name" value="tRNA_m1G_MeTrfase_TrmD"/>
</dbReference>
<dbReference type="InterPro" id="IPR029026">
    <property type="entry name" value="tRNA_m1G_MTases_N"/>
</dbReference>
<dbReference type="InterPro" id="IPR016009">
    <property type="entry name" value="tRNA_MeTrfase_TRMD/TRM10"/>
</dbReference>
<dbReference type="NCBIfam" id="NF000648">
    <property type="entry name" value="PRK00026.1"/>
    <property type="match status" value="1"/>
</dbReference>
<dbReference type="NCBIfam" id="TIGR00088">
    <property type="entry name" value="trmD"/>
    <property type="match status" value="1"/>
</dbReference>
<dbReference type="PANTHER" id="PTHR46417">
    <property type="entry name" value="TRNA (GUANINE-N(1)-)-METHYLTRANSFERASE"/>
    <property type="match status" value="1"/>
</dbReference>
<dbReference type="PANTHER" id="PTHR46417:SF1">
    <property type="entry name" value="TRNA (GUANINE-N(1)-)-METHYLTRANSFERASE"/>
    <property type="match status" value="1"/>
</dbReference>
<dbReference type="Pfam" id="PF01746">
    <property type="entry name" value="tRNA_m1G_MT"/>
    <property type="match status" value="1"/>
</dbReference>
<dbReference type="PIRSF" id="PIRSF000386">
    <property type="entry name" value="tRNA_mtase"/>
    <property type="match status" value="1"/>
</dbReference>
<dbReference type="SUPFAM" id="SSF75217">
    <property type="entry name" value="alpha/beta knot"/>
    <property type="match status" value="1"/>
</dbReference>
<keyword id="KW-0963">Cytoplasm</keyword>
<keyword id="KW-0489">Methyltransferase</keyword>
<keyword id="KW-0949">S-adenosyl-L-methionine</keyword>
<keyword id="KW-0808">Transferase</keyword>
<keyword id="KW-0819">tRNA processing</keyword>
<organism>
    <name type="scientific">Francisella philomiragia subsp. philomiragia (strain ATCC 25017 / CCUG 19701 / FSC 153 / O#319-036)</name>
    <dbReference type="NCBI Taxonomy" id="484022"/>
    <lineage>
        <taxon>Bacteria</taxon>
        <taxon>Pseudomonadati</taxon>
        <taxon>Pseudomonadota</taxon>
        <taxon>Gammaproteobacteria</taxon>
        <taxon>Thiotrichales</taxon>
        <taxon>Francisellaceae</taxon>
        <taxon>Francisella</taxon>
    </lineage>
</organism>
<comment type="function">
    <text evidence="1">Specifically methylates guanosine-37 in various tRNAs.</text>
</comment>
<comment type="catalytic activity">
    <reaction evidence="1">
        <text>guanosine(37) in tRNA + S-adenosyl-L-methionine = N(1)-methylguanosine(37) in tRNA + S-adenosyl-L-homocysteine + H(+)</text>
        <dbReference type="Rhea" id="RHEA:36899"/>
        <dbReference type="Rhea" id="RHEA-COMP:10145"/>
        <dbReference type="Rhea" id="RHEA-COMP:10147"/>
        <dbReference type="ChEBI" id="CHEBI:15378"/>
        <dbReference type="ChEBI" id="CHEBI:57856"/>
        <dbReference type="ChEBI" id="CHEBI:59789"/>
        <dbReference type="ChEBI" id="CHEBI:73542"/>
        <dbReference type="ChEBI" id="CHEBI:74269"/>
        <dbReference type="EC" id="2.1.1.228"/>
    </reaction>
</comment>
<comment type="subunit">
    <text evidence="1">Homodimer.</text>
</comment>
<comment type="subcellular location">
    <subcellularLocation>
        <location evidence="1">Cytoplasm</location>
    </subcellularLocation>
</comment>
<comment type="similarity">
    <text evidence="1">Belongs to the RNA methyltransferase TrmD family.</text>
</comment>
<sequence length="255" mass="28729">MKFGIISIFPEMFKAINDFGITARAIKDSKVSIKCFNPRDYTTDKHATVDDTSFGGGAGMVMKYEPLSQAIKDAKSTLGYNTKVVYLSPQGSVFNHNKALELLENDSLILLCGRYEGVDERLIQDYVDEEISVGDFVLSGGELPAMLVMDSLIRLLPEVLGNKDSMIEDSFYDGLLDYPHYTKPAVLPDGNAVPSVLLSGNHKEIAKWRRKQKLIRTYERRKDLIECLCLSEEDKRIINDYKIDKVSTKGEKNEK</sequence>